<sequence>MAATLCCRLLPKAGWVPLTQSVRHGSKAVTRHKKPVHFQKQKLLAVTEYIPPTLSAPPAALAPRVKKTGEESSLAVMLRKDLENLFQEYKMIAVAQNNAISAEDMIHLKHRLKKHAINVKFFPNQVTRSFLNSSIYGNMSPLIFGETVLLASKEPKVKEMLQALRHNPQIVLLGACIENTLFSYQGILSYSKLPSIAIIRGELVSGLTMMTSKTVSMLHHHPAHLSALLQQYVKQQSSADTDKDASIQEAAA</sequence>
<feature type="transit peptide" description="Mitochondrion" evidence="2">
    <location>
        <begin position="1"/>
        <end position="24"/>
    </location>
</feature>
<feature type="chain" id="PRO_0000273078" description="Large ribosomal subunit protein uL10m">
    <location>
        <begin position="25"/>
        <end position="252"/>
    </location>
</feature>
<evidence type="ECO:0000250" key="1">
    <source>
        <dbReference type="UniProtKB" id="Q7Z7H8"/>
    </source>
</evidence>
<evidence type="ECO:0000255" key="2"/>
<evidence type="ECO:0000305" key="3"/>
<proteinExistence type="evidence at transcript level"/>
<accession>Q5BJB7</accession>
<organism>
    <name type="scientific">Danio rerio</name>
    <name type="common">Zebrafish</name>
    <name type="synonym">Brachydanio rerio</name>
    <dbReference type="NCBI Taxonomy" id="7955"/>
    <lineage>
        <taxon>Eukaryota</taxon>
        <taxon>Metazoa</taxon>
        <taxon>Chordata</taxon>
        <taxon>Craniata</taxon>
        <taxon>Vertebrata</taxon>
        <taxon>Euteleostomi</taxon>
        <taxon>Actinopterygii</taxon>
        <taxon>Neopterygii</taxon>
        <taxon>Teleostei</taxon>
        <taxon>Ostariophysi</taxon>
        <taxon>Cypriniformes</taxon>
        <taxon>Danionidae</taxon>
        <taxon>Danioninae</taxon>
        <taxon>Danio</taxon>
    </lineage>
</organism>
<comment type="subunit">
    <text evidence="1">Component of the mitochondrial ribosome large subunit (39S) which comprises a 16S rRNA and about 50 distinct proteins.</text>
</comment>
<comment type="subcellular location">
    <subcellularLocation>
        <location evidence="1">Mitochondrion</location>
    </subcellularLocation>
</comment>
<comment type="similarity">
    <text evidence="3">Belongs to the universal ribosomal protein uL10 family.</text>
</comment>
<keyword id="KW-0496">Mitochondrion</keyword>
<keyword id="KW-1185">Reference proteome</keyword>
<keyword id="KW-0687">Ribonucleoprotein</keyword>
<keyword id="KW-0689">Ribosomal protein</keyword>
<keyword id="KW-0809">Transit peptide</keyword>
<reference key="1">
    <citation type="submission" date="2005-03" db="EMBL/GenBank/DDBJ databases">
        <authorList>
            <consortium name="NIH - Zebrafish Gene Collection (ZGC) project"/>
        </authorList>
    </citation>
    <scope>NUCLEOTIDE SEQUENCE [LARGE SCALE MRNA]</scope>
    <source>
        <tissue>Heart</tissue>
    </source>
</reference>
<dbReference type="EMBL" id="BC091546">
    <property type="protein sequence ID" value="AAH91546.1"/>
    <property type="molecule type" value="mRNA"/>
</dbReference>
<dbReference type="RefSeq" id="NP_001013476.1">
    <property type="nucleotide sequence ID" value="NM_001013458.2"/>
</dbReference>
<dbReference type="SMR" id="Q5BJB7"/>
<dbReference type="FunCoup" id="Q5BJB7">
    <property type="interactions" value="1379"/>
</dbReference>
<dbReference type="STRING" id="7955.ENSDARP00000066302"/>
<dbReference type="PaxDb" id="7955-ENSDARP00000066302"/>
<dbReference type="Ensembl" id="ENSDART00000066303">
    <property type="protein sequence ID" value="ENSDARP00000066302"/>
    <property type="gene ID" value="ENSDARG00000045091"/>
</dbReference>
<dbReference type="Ensembl" id="ENSDART00000184117">
    <property type="protein sequence ID" value="ENSDARP00000157369"/>
    <property type="gene ID" value="ENSDARG00000112205"/>
</dbReference>
<dbReference type="GeneID" id="541330"/>
<dbReference type="KEGG" id="dre:541330"/>
<dbReference type="AGR" id="ZFIN:ZDB-GENE-050320-19"/>
<dbReference type="CTD" id="124995"/>
<dbReference type="ZFIN" id="ZDB-GENE-050320-19">
    <property type="gene designation" value="mrpl10"/>
</dbReference>
<dbReference type="eggNOG" id="KOG4241">
    <property type="taxonomic scope" value="Eukaryota"/>
</dbReference>
<dbReference type="HOGENOM" id="CLU_073093_0_0_1"/>
<dbReference type="InParanoid" id="Q5BJB7"/>
<dbReference type="OMA" id="RHRLYKH"/>
<dbReference type="OrthoDB" id="360689at2759"/>
<dbReference type="PhylomeDB" id="Q5BJB7"/>
<dbReference type="TreeFam" id="TF321349"/>
<dbReference type="Reactome" id="R-DRE-5389840">
    <property type="pathway name" value="Mitochondrial translation elongation"/>
</dbReference>
<dbReference type="Reactome" id="R-DRE-5419276">
    <property type="pathway name" value="Mitochondrial translation termination"/>
</dbReference>
<dbReference type="PRO" id="PR:Q5BJB7"/>
<dbReference type="Proteomes" id="UP000000437">
    <property type="component" value="Alternate scaffold 12"/>
</dbReference>
<dbReference type="Proteomes" id="UP000000437">
    <property type="component" value="Chromosome 12"/>
</dbReference>
<dbReference type="Bgee" id="ENSDARG00000045091">
    <property type="expression patterns" value="Expressed in tail and 24 other cell types or tissues"/>
</dbReference>
<dbReference type="GO" id="GO:0005762">
    <property type="term" value="C:mitochondrial large ribosomal subunit"/>
    <property type="evidence" value="ECO:0000250"/>
    <property type="project" value="UniProtKB"/>
</dbReference>
<dbReference type="GO" id="GO:1990904">
    <property type="term" value="C:ribonucleoprotein complex"/>
    <property type="evidence" value="ECO:0000250"/>
    <property type="project" value="UniProtKB"/>
</dbReference>
<dbReference type="GO" id="GO:0003735">
    <property type="term" value="F:structural constituent of ribosome"/>
    <property type="evidence" value="ECO:0000250"/>
    <property type="project" value="UniProtKB"/>
</dbReference>
<dbReference type="GO" id="GO:0006412">
    <property type="term" value="P:translation"/>
    <property type="evidence" value="ECO:0000250"/>
    <property type="project" value="UniProtKB"/>
</dbReference>
<dbReference type="Gene3D" id="3.30.70.1730">
    <property type="match status" value="1"/>
</dbReference>
<dbReference type="InterPro" id="IPR001790">
    <property type="entry name" value="Ribosomal_uL10"/>
</dbReference>
<dbReference type="InterPro" id="IPR043141">
    <property type="entry name" value="Ribosomal_uL10-like_sf"/>
</dbReference>
<dbReference type="InterPro" id="IPR047865">
    <property type="entry name" value="Ribosomal_uL10_bac_type"/>
</dbReference>
<dbReference type="PANTHER" id="PTHR11560">
    <property type="entry name" value="39S RIBOSOMAL PROTEIN L10, MITOCHONDRIAL"/>
    <property type="match status" value="1"/>
</dbReference>
<dbReference type="Pfam" id="PF00466">
    <property type="entry name" value="Ribosomal_L10"/>
    <property type="match status" value="1"/>
</dbReference>
<dbReference type="SUPFAM" id="SSF160369">
    <property type="entry name" value="Ribosomal protein L10-like"/>
    <property type="match status" value="1"/>
</dbReference>
<name>RM10_DANRE</name>
<protein>
    <recommendedName>
        <fullName evidence="3">Large ribosomal subunit protein uL10m</fullName>
    </recommendedName>
    <alternativeName>
        <fullName>39S ribosomal protein L10, mitochondrial</fullName>
        <shortName>L10mt</shortName>
        <shortName>MRP-L10</shortName>
    </alternativeName>
</protein>
<gene>
    <name type="primary">mrpl10</name>
    <name type="ORF">zgc:112529</name>
</gene>